<comment type="subcellular location">
    <subcellularLocation>
        <location evidence="2">Host membrane</location>
        <topology evidence="2">Single-pass type I membrane protein</topology>
    </subcellularLocation>
</comment>
<proteinExistence type="inferred from homology"/>
<organism>
    <name type="scientific">Acidianus bottle-shaped virus (isolate Italy/Pozzuoli)</name>
    <name type="common">ABV</name>
    <dbReference type="NCBI Taxonomy" id="654911"/>
    <lineage>
        <taxon>Viruses</taxon>
        <taxon>Viruses incertae sedis</taxon>
        <taxon>Ampullaviridae</taxon>
        <taxon>Bottigliavirus</taxon>
        <taxon>Bottigliavirus ABV</taxon>
    </lineage>
</organism>
<name>Y095_ABVP</name>
<evidence type="ECO:0000255" key="1"/>
<evidence type="ECO:0000305" key="2"/>
<gene>
    <name type="ORF">ORF95</name>
</gene>
<accession>A4ZUB1</accession>
<organismHost>
    <name type="scientific">Acidianus convivator</name>
    <dbReference type="NCBI Taxonomy" id="269667"/>
</organismHost>
<protein>
    <recommendedName>
        <fullName>Uncharacterized protein ORF95</fullName>
    </recommendedName>
</protein>
<feature type="signal peptide" evidence="1">
    <location>
        <begin position="1"/>
        <end position="22"/>
    </location>
</feature>
<feature type="chain" id="PRO_0000384844" description="Uncharacterized protein ORF95">
    <location>
        <begin position="23"/>
        <end position="95"/>
    </location>
</feature>
<feature type="topological domain" description="Extracellular" evidence="1">
    <location>
        <begin position="23"/>
        <end position="52"/>
    </location>
</feature>
<feature type="transmembrane region" description="Helical" evidence="1">
    <location>
        <begin position="53"/>
        <end position="69"/>
    </location>
</feature>
<feature type="topological domain" description="Cytoplasmic" evidence="1">
    <location>
        <begin position="70"/>
        <end position="95"/>
    </location>
</feature>
<sequence>MLPGFTMIITSLLLTFFREVEHLLPECLTITNTPQRTLVLIQRFTLLQKVMTIHLLLSIGTLGSLFTLHPQLLKTNLLQKLHKELNSNLDYLISC</sequence>
<keyword id="KW-1043">Host membrane</keyword>
<keyword id="KW-0472">Membrane</keyword>
<keyword id="KW-1185">Reference proteome</keyword>
<keyword id="KW-0732">Signal</keyword>
<keyword id="KW-0812">Transmembrane</keyword>
<keyword id="KW-1133">Transmembrane helix</keyword>
<dbReference type="EMBL" id="EF432053">
    <property type="protein sequence ID" value="ABP73415.1"/>
    <property type="molecule type" value="Genomic_DNA"/>
</dbReference>
<dbReference type="SMR" id="A4ZUB1"/>
<dbReference type="KEGG" id="vg:5129833"/>
<dbReference type="Proteomes" id="UP000000513">
    <property type="component" value="Segment"/>
</dbReference>
<dbReference type="GO" id="GO:0033644">
    <property type="term" value="C:host cell membrane"/>
    <property type="evidence" value="ECO:0007669"/>
    <property type="project" value="UniProtKB-SubCell"/>
</dbReference>
<dbReference type="GO" id="GO:0016020">
    <property type="term" value="C:membrane"/>
    <property type="evidence" value="ECO:0007669"/>
    <property type="project" value="UniProtKB-KW"/>
</dbReference>
<reference key="1">
    <citation type="journal article" date="2007" name="Virology">
        <title>Genome of the Acidianus bottle-shaped virus and insights into the replication and packaging mechanisms.</title>
        <authorList>
            <person name="Peng X."/>
            <person name="Basta T."/>
            <person name="Haring M."/>
            <person name="Garrett R.A."/>
            <person name="Prangishvili D."/>
        </authorList>
    </citation>
    <scope>NUCLEOTIDE SEQUENCE [GENOMIC DNA]</scope>
</reference>